<proteinExistence type="inferred from homology"/>
<dbReference type="EC" id="2.7.4.22" evidence="1"/>
<dbReference type="EMBL" id="CP000713">
    <property type="protein sequence ID" value="ABQ94742.1"/>
    <property type="molecule type" value="Genomic_DNA"/>
</dbReference>
<dbReference type="SMR" id="A5WGF1"/>
<dbReference type="STRING" id="349106.PsycPRwf_1802"/>
<dbReference type="KEGG" id="prw:PsycPRwf_1802"/>
<dbReference type="eggNOG" id="COG0528">
    <property type="taxonomic scope" value="Bacteria"/>
</dbReference>
<dbReference type="HOGENOM" id="CLU_033861_0_0_6"/>
<dbReference type="UniPathway" id="UPA00159">
    <property type="reaction ID" value="UER00275"/>
</dbReference>
<dbReference type="GO" id="GO:0005829">
    <property type="term" value="C:cytosol"/>
    <property type="evidence" value="ECO:0007669"/>
    <property type="project" value="TreeGrafter"/>
</dbReference>
<dbReference type="GO" id="GO:0005524">
    <property type="term" value="F:ATP binding"/>
    <property type="evidence" value="ECO:0007669"/>
    <property type="project" value="UniProtKB-KW"/>
</dbReference>
<dbReference type="GO" id="GO:0033862">
    <property type="term" value="F:UMP kinase activity"/>
    <property type="evidence" value="ECO:0007669"/>
    <property type="project" value="UniProtKB-EC"/>
</dbReference>
<dbReference type="GO" id="GO:0044210">
    <property type="term" value="P:'de novo' CTP biosynthetic process"/>
    <property type="evidence" value="ECO:0007669"/>
    <property type="project" value="UniProtKB-UniRule"/>
</dbReference>
<dbReference type="GO" id="GO:0006225">
    <property type="term" value="P:UDP biosynthetic process"/>
    <property type="evidence" value="ECO:0007669"/>
    <property type="project" value="TreeGrafter"/>
</dbReference>
<dbReference type="CDD" id="cd04254">
    <property type="entry name" value="AAK_UMPK-PyrH-Ec"/>
    <property type="match status" value="1"/>
</dbReference>
<dbReference type="FunFam" id="3.40.1160.10:FF:000001">
    <property type="entry name" value="Uridylate kinase"/>
    <property type="match status" value="1"/>
</dbReference>
<dbReference type="Gene3D" id="3.40.1160.10">
    <property type="entry name" value="Acetylglutamate kinase-like"/>
    <property type="match status" value="1"/>
</dbReference>
<dbReference type="HAMAP" id="MF_01220_B">
    <property type="entry name" value="PyrH_B"/>
    <property type="match status" value="1"/>
</dbReference>
<dbReference type="InterPro" id="IPR036393">
    <property type="entry name" value="AceGlu_kinase-like_sf"/>
</dbReference>
<dbReference type="InterPro" id="IPR001048">
    <property type="entry name" value="Asp/Glu/Uridylate_kinase"/>
</dbReference>
<dbReference type="InterPro" id="IPR011817">
    <property type="entry name" value="Uridylate_kinase"/>
</dbReference>
<dbReference type="InterPro" id="IPR015963">
    <property type="entry name" value="Uridylate_kinase_bac"/>
</dbReference>
<dbReference type="NCBIfam" id="TIGR02075">
    <property type="entry name" value="pyrH_bact"/>
    <property type="match status" value="1"/>
</dbReference>
<dbReference type="PANTHER" id="PTHR42833">
    <property type="entry name" value="URIDYLATE KINASE"/>
    <property type="match status" value="1"/>
</dbReference>
<dbReference type="PANTHER" id="PTHR42833:SF4">
    <property type="entry name" value="URIDYLATE KINASE PUMPKIN, CHLOROPLASTIC"/>
    <property type="match status" value="1"/>
</dbReference>
<dbReference type="Pfam" id="PF00696">
    <property type="entry name" value="AA_kinase"/>
    <property type="match status" value="1"/>
</dbReference>
<dbReference type="PIRSF" id="PIRSF005650">
    <property type="entry name" value="Uridylate_kin"/>
    <property type="match status" value="1"/>
</dbReference>
<dbReference type="SUPFAM" id="SSF53633">
    <property type="entry name" value="Carbamate kinase-like"/>
    <property type="match status" value="1"/>
</dbReference>
<feature type="chain" id="PRO_0000323931" description="Uridylate kinase">
    <location>
        <begin position="1"/>
        <end position="241"/>
    </location>
</feature>
<feature type="region of interest" description="Involved in allosteric activation by GTP" evidence="1">
    <location>
        <begin position="22"/>
        <end position="27"/>
    </location>
</feature>
<feature type="binding site" evidence="1">
    <location>
        <begin position="14"/>
        <end position="17"/>
    </location>
    <ligand>
        <name>ATP</name>
        <dbReference type="ChEBI" id="CHEBI:30616"/>
    </ligand>
</feature>
<feature type="binding site" evidence="1">
    <location>
        <position position="56"/>
    </location>
    <ligand>
        <name>UMP</name>
        <dbReference type="ChEBI" id="CHEBI:57865"/>
    </ligand>
</feature>
<feature type="binding site" evidence="1">
    <location>
        <position position="57"/>
    </location>
    <ligand>
        <name>ATP</name>
        <dbReference type="ChEBI" id="CHEBI:30616"/>
    </ligand>
</feature>
<feature type="binding site" evidence="1">
    <location>
        <position position="61"/>
    </location>
    <ligand>
        <name>ATP</name>
        <dbReference type="ChEBI" id="CHEBI:30616"/>
    </ligand>
</feature>
<feature type="binding site" evidence="1">
    <location>
        <position position="77"/>
    </location>
    <ligand>
        <name>UMP</name>
        <dbReference type="ChEBI" id="CHEBI:57865"/>
    </ligand>
</feature>
<feature type="binding site" evidence="1">
    <location>
        <begin position="138"/>
        <end position="145"/>
    </location>
    <ligand>
        <name>UMP</name>
        <dbReference type="ChEBI" id="CHEBI:57865"/>
    </ligand>
</feature>
<feature type="binding site" evidence="1">
    <location>
        <position position="165"/>
    </location>
    <ligand>
        <name>ATP</name>
        <dbReference type="ChEBI" id="CHEBI:30616"/>
    </ligand>
</feature>
<feature type="binding site" evidence="1">
    <location>
        <position position="171"/>
    </location>
    <ligand>
        <name>ATP</name>
        <dbReference type="ChEBI" id="CHEBI:30616"/>
    </ligand>
</feature>
<feature type="binding site" evidence="1">
    <location>
        <position position="174"/>
    </location>
    <ligand>
        <name>ATP</name>
        <dbReference type="ChEBI" id="CHEBI:30616"/>
    </ligand>
</feature>
<reference key="1">
    <citation type="submission" date="2007-05" db="EMBL/GenBank/DDBJ databases">
        <title>Complete sequence of chromosome of Psychrobacter sp. PRwf-1.</title>
        <authorList>
            <consortium name="US DOE Joint Genome Institute"/>
            <person name="Copeland A."/>
            <person name="Lucas S."/>
            <person name="Lapidus A."/>
            <person name="Barry K."/>
            <person name="Detter J.C."/>
            <person name="Glavina del Rio T."/>
            <person name="Hammon N."/>
            <person name="Israni S."/>
            <person name="Dalin E."/>
            <person name="Tice H."/>
            <person name="Pitluck S."/>
            <person name="Chain P."/>
            <person name="Malfatti S."/>
            <person name="Shin M."/>
            <person name="Vergez L."/>
            <person name="Schmutz J."/>
            <person name="Larimer F."/>
            <person name="Land M."/>
            <person name="Hauser L."/>
            <person name="Kyrpides N."/>
            <person name="Kim E."/>
            <person name="Tiedje J."/>
            <person name="Richardson P."/>
        </authorList>
    </citation>
    <scope>NUCLEOTIDE SEQUENCE [LARGE SCALE GENOMIC DNA]</scope>
    <source>
        <strain>PRwf-1</strain>
    </source>
</reference>
<protein>
    <recommendedName>
        <fullName evidence="1">Uridylate kinase</fullName>
        <shortName evidence="1">UK</shortName>
        <ecNumber evidence="1">2.7.4.22</ecNumber>
    </recommendedName>
    <alternativeName>
        <fullName evidence="1">Uridine monophosphate kinase</fullName>
        <shortName evidence="1">UMP kinase</shortName>
        <shortName evidence="1">UMPK</shortName>
    </alternativeName>
</protein>
<sequence length="241" mass="25937">MSDKNPQYSRILLKLSGEALAGGLGMGIDTSVLDKMSLAIAHLCGLGVQVGIVVGGGNLYRGSQLQKEGLVGRVTGDQMGMLATVMNGLAMRDALERRNINTRLMSALPIGEVTESYSSRNAIRYLKNGDVCIFVAGTGNPFFTTDTAACLRGIEIEAGVILKATKVDGVYDKDPSEHADAKKYDALTFDEVLEQKLGVMDLTAIALCREHNVPLQVFDMNKPNSLLNVIMGENEGTRVFH</sequence>
<name>PYRH_PSYWF</name>
<evidence type="ECO:0000255" key="1">
    <source>
        <dbReference type="HAMAP-Rule" id="MF_01220"/>
    </source>
</evidence>
<keyword id="KW-0021">Allosteric enzyme</keyword>
<keyword id="KW-0067">ATP-binding</keyword>
<keyword id="KW-0963">Cytoplasm</keyword>
<keyword id="KW-0418">Kinase</keyword>
<keyword id="KW-0547">Nucleotide-binding</keyword>
<keyword id="KW-0665">Pyrimidine biosynthesis</keyword>
<keyword id="KW-0808">Transferase</keyword>
<gene>
    <name evidence="1" type="primary">pyrH</name>
    <name type="ordered locus">PsycPRwf_1802</name>
</gene>
<organism>
    <name type="scientific">Psychrobacter sp. (strain PRwf-1)</name>
    <dbReference type="NCBI Taxonomy" id="349106"/>
    <lineage>
        <taxon>Bacteria</taxon>
        <taxon>Pseudomonadati</taxon>
        <taxon>Pseudomonadota</taxon>
        <taxon>Gammaproteobacteria</taxon>
        <taxon>Moraxellales</taxon>
        <taxon>Moraxellaceae</taxon>
        <taxon>Psychrobacter</taxon>
    </lineage>
</organism>
<comment type="function">
    <text evidence="1">Catalyzes the reversible phosphorylation of UMP to UDP.</text>
</comment>
<comment type="catalytic activity">
    <reaction evidence="1">
        <text>UMP + ATP = UDP + ADP</text>
        <dbReference type="Rhea" id="RHEA:24400"/>
        <dbReference type="ChEBI" id="CHEBI:30616"/>
        <dbReference type="ChEBI" id="CHEBI:57865"/>
        <dbReference type="ChEBI" id="CHEBI:58223"/>
        <dbReference type="ChEBI" id="CHEBI:456216"/>
        <dbReference type="EC" id="2.7.4.22"/>
    </reaction>
</comment>
<comment type="activity regulation">
    <text evidence="1">Allosterically activated by GTP. Inhibited by UTP.</text>
</comment>
<comment type="pathway">
    <text evidence="1">Pyrimidine metabolism; CTP biosynthesis via de novo pathway; UDP from UMP (UMPK route): step 1/1.</text>
</comment>
<comment type="subunit">
    <text evidence="1">Homohexamer.</text>
</comment>
<comment type="subcellular location">
    <subcellularLocation>
        <location evidence="1">Cytoplasm</location>
    </subcellularLocation>
</comment>
<comment type="similarity">
    <text evidence="1">Belongs to the UMP kinase family.</text>
</comment>
<accession>A5WGF1</accession>